<proteinExistence type="inferred from homology"/>
<keyword id="KW-1185">Reference proteome</keyword>
<keyword id="KW-0687">Ribonucleoprotein</keyword>
<keyword id="KW-0689">Ribosomal protein</keyword>
<organism>
    <name type="scientific">Thioalkalivibrio sulfidiphilus (strain HL-EbGR7)</name>
    <dbReference type="NCBI Taxonomy" id="396588"/>
    <lineage>
        <taxon>Bacteria</taxon>
        <taxon>Pseudomonadati</taxon>
        <taxon>Pseudomonadota</taxon>
        <taxon>Gammaproteobacteria</taxon>
        <taxon>Chromatiales</taxon>
        <taxon>Ectothiorhodospiraceae</taxon>
        <taxon>Thioalkalivibrio</taxon>
    </lineage>
</organism>
<comment type="similarity">
    <text evidence="1">Belongs to the universal ribosomal protein uS2 family.</text>
</comment>
<accession>B8GPS8</accession>
<protein>
    <recommendedName>
        <fullName evidence="1">Small ribosomal subunit protein uS2</fullName>
    </recommendedName>
    <alternativeName>
        <fullName evidence="3">30S ribosomal protein S2</fullName>
    </alternativeName>
</protein>
<dbReference type="EMBL" id="CP001339">
    <property type="protein sequence ID" value="ACL72245.1"/>
    <property type="molecule type" value="Genomic_DNA"/>
</dbReference>
<dbReference type="RefSeq" id="WP_012637728.1">
    <property type="nucleotide sequence ID" value="NC_011901.1"/>
</dbReference>
<dbReference type="SMR" id="B8GPS8"/>
<dbReference type="STRING" id="396588.Tgr7_1159"/>
<dbReference type="KEGG" id="tgr:Tgr7_1159"/>
<dbReference type="eggNOG" id="COG0052">
    <property type="taxonomic scope" value="Bacteria"/>
</dbReference>
<dbReference type="HOGENOM" id="CLU_040318_1_2_6"/>
<dbReference type="OrthoDB" id="9808036at2"/>
<dbReference type="Proteomes" id="UP000002383">
    <property type="component" value="Chromosome"/>
</dbReference>
<dbReference type="GO" id="GO:0022627">
    <property type="term" value="C:cytosolic small ribosomal subunit"/>
    <property type="evidence" value="ECO:0007669"/>
    <property type="project" value="TreeGrafter"/>
</dbReference>
<dbReference type="GO" id="GO:0003735">
    <property type="term" value="F:structural constituent of ribosome"/>
    <property type="evidence" value="ECO:0007669"/>
    <property type="project" value="InterPro"/>
</dbReference>
<dbReference type="GO" id="GO:0006412">
    <property type="term" value="P:translation"/>
    <property type="evidence" value="ECO:0007669"/>
    <property type="project" value="UniProtKB-UniRule"/>
</dbReference>
<dbReference type="CDD" id="cd01425">
    <property type="entry name" value="RPS2"/>
    <property type="match status" value="1"/>
</dbReference>
<dbReference type="FunFam" id="1.10.287.610:FF:000001">
    <property type="entry name" value="30S ribosomal protein S2"/>
    <property type="match status" value="1"/>
</dbReference>
<dbReference type="Gene3D" id="3.40.50.10490">
    <property type="entry name" value="Glucose-6-phosphate isomerase like protein, domain 1"/>
    <property type="match status" value="1"/>
</dbReference>
<dbReference type="Gene3D" id="1.10.287.610">
    <property type="entry name" value="Helix hairpin bin"/>
    <property type="match status" value="1"/>
</dbReference>
<dbReference type="HAMAP" id="MF_00291_B">
    <property type="entry name" value="Ribosomal_uS2_B"/>
    <property type="match status" value="1"/>
</dbReference>
<dbReference type="InterPro" id="IPR001865">
    <property type="entry name" value="Ribosomal_uS2"/>
</dbReference>
<dbReference type="InterPro" id="IPR005706">
    <property type="entry name" value="Ribosomal_uS2_bac/mit/plastid"/>
</dbReference>
<dbReference type="InterPro" id="IPR018130">
    <property type="entry name" value="Ribosomal_uS2_CS"/>
</dbReference>
<dbReference type="InterPro" id="IPR023591">
    <property type="entry name" value="Ribosomal_uS2_flav_dom_sf"/>
</dbReference>
<dbReference type="NCBIfam" id="TIGR01011">
    <property type="entry name" value="rpsB_bact"/>
    <property type="match status" value="1"/>
</dbReference>
<dbReference type="PANTHER" id="PTHR12534">
    <property type="entry name" value="30S RIBOSOMAL PROTEIN S2 PROKARYOTIC AND ORGANELLAR"/>
    <property type="match status" value="1"/>
</dbReference>
<dbReference type="PANTHER" id="PTHR12534:SF0">
    <property type="entry name" value="SMALL RIBOSOMAL SUBUNIT PROTEIN US2M"/>
    <property type="match status" value="1"/>
</dbReference>
<dbReference type="Pfam" id="PF00318">
    <property type="entry name" value="Ribosomal_S2"/>
    <property type="match status" value="1"/>
</dbReference>
<dbReference type="PRINTS" id="PR00395">
    <property type="entry name" value="RIBOSOMALS2"/>
</dbReference>
<dbReference type="SUPFAM" id="SSF52313">
    <property type="entry name" value="Ribosomal protein S2"/>
    <property type="match status" value="1"/>
</dbReference>
<dbReference type="PROSITE" id="PS00962">
    <property type="entry name" value="RIBOSOMAL_S2_1"/>
    <property type="match status" value="1"/>
</dbReference>
<dbReference type="PROSITE" id="PS00963">
    <property type="entry name" value="RIBOSOMAL_S2_2"/>
    <property type="match status" value="1"/>
</dbReference>
<sequence>MSSVTMRQMLEAGVHFGHQTRYWNPKMAPFIFGERNKIHIINLEQTLPLFNDAMNYLGKLAGNGGKILFVGTKRSARDTIAEEALRCKMPYVNHRWLGGMLTNFKTVRESIRRLKDLELMREDGTFNRLSKKEALMRTRELEKLERSLGGIKDMNGLPDAMFVIDVGYEKIAVKEANKLGIPVIAVVDTNNSIEGVDYVIPGNDDAMRAIQLYVSAAADAIANAQVTSRATAAPAGDDEFVEVREGAEASKKKATVKKKAAPRAASGESAEAAAE</sequence>
<name>RS2_THISH</name>
<reference key="1">
    <citation type="journal article" date="2011" name="Stand. Genomic Sci.">
        <title>Complete genome sequence of 'Thioalkalivibrio sulfidophilus' HL-EbGr7.</title>
        <authorList>
            <person name="Muyzer G."/>
            <person name="Sorokin D.Y."/>
            <person name="Mavromatis K."/>
            <person name="Lapidus A."/>
            <person name="Clum A."/>
            <person name="Ivanova N."/>
            <person name="Pati A."/>
            <person name="d'Haeseleer P."/>
            <person name="Woyke T."/>
            <person name="Kyrpides N.C."/>
        </authorList>
    </citation>
    <scope>NUCLEOTIDE SEQUENCE [LARGE SCALE GENOMIC DNA]</scope>
    <source>
        <strain>HL-EbGR7</strain>
    </source>
</reference>
<evidence type="ECO:0000255" key="1">
    <source>
        <dbReference type="HAMAP-Rule" id="MF_00291"/>
    </source>
</evidence>
<evidence type="ECO:0000256" key="2">
    <source>
        <dbReference type="SAM" id="MobiDB-lite"/>
    </source>
</evidence>
<evidence type="ECO:0000305" key="3"/>
<gene>
    <name evidence="1" type="primary">rpsB</name>
    <name type="ordered locus">Tgr7_1159</name>
</gene>
<feature type="chain" id="PRO_1000194353" description="Small ribosomal subunit protein uS2">
    <location>
        <begin position="1"/>
        <end position="275"/>
    </location>
</feature>
<feature type="region of interest" description="Disordered" evidence="2">
    <location>
        <begin position="244"/>
        <end position="275"/>
    </location>
</feature>
<feature type="compositionally biased region" description="Basic residues" evidence="2">
    <location>
        <begin position="252"/>
        <end position="261"/>
    </location>
</feature>
<feature type="compositionally biased region" description="Low complexity" evidence="2">
    <location>
        <begin position="262"/>
        <end position="275"/>
    </location>
</feature>